<keyword id="KW-0067">ATP-binding</keyword>
<keyword id="KW-0106">Calcium</keyword>
<keyword id="KW-0418">Kinase</keyword>
<keyword id="KW-0449">Lipoprotein</keyword>
<keyword id="KW-0472">Membrane</keyword>
<keyword id="KW-0479">Metal-binding</keyword>
<keyword id="KW-0519">Myristate</keyword>
<keyword id="KW-0547">Nucleotide-binding</keyword>
<keyword id="KW-1185">Reference proteome</keyword>
<keyword id="KW-0677">Repeat</keyword>
<keyword id="KW-0723">Serine/threonine-protein kinase</keyword>
<keyword id="KW-0808">Transferase</keyword>
<evidence type="ECO:0000250" key="1">
    <source>
        <dbReference type="UniProtKB" id="Q06850"/>
    </source>
</evidence>
<evidence type="ECO:0000255" key="2"/>
<evidence type="ECO:0000255" key="3">
    <source>
        <dbReference type="PROSITE-ProRule" id="PRU00159"/>
    </source>
</evidence>
<evidence type="ECO:0000255" key="4">
    <source>
        <dbReference type="PROSITE-ProRule" id="PRU00448"/>
    </source>
</evidence>
<evidence type="ECO:0000256" key="5">
    <source>
        <dbReference type="SAM" id="MobiDB-lite"/>
    </source>
</evidence>
<evidence type="ECO:0000269" key="6">
    <source>
    </source>
</evidence>
<evidence type="ECO:0000269" key="7">
    <source>
    </source>
</evidence>
<evidence type="ECO:0000303" key="8">
    <source>
    </source>
</evidence>
<evidence type="ECO:0000305" key="9"/>
<evidence type="ECO:0000312" key="10">
    <source>
        <dbReference type="EMBL" id="AAT75244.1"/>
    </source>
</evidence>
<evidence type="ECO:0000312" key="11">
    <source>
        <dbReference type="EMBL" id="ABF99256.1"/>
    </source>
</evidence>
<evidence type="ECO:0000312" key="12">
    <source>
        <dbReference type="EMBL" id="BAF13417.1"/>
    </source>
</evidence>
<dbReference type="EC" id="2.7.11.1" evidence="9"/>
<dbReference type="EMBL" id="AC084296">
    <property type="protein sequence ID" value="AAT75244.1"/>
    <property type="molecule type" value="Genomic_DNA"/>
</dbReference>
<dbReference type="EMBL" id="DP000009">
    <property type="protein sequence ID" value="ABF99256.1"/>
    <property type="molecule type" value="Genomic_DNA"/>
</dbReference>
<dbReference type="EMBL" id="AP008209">
    <property type="protein sequence ID" value="BAF13417.1"/>
    <property type="molecule type" value="Genomic_DNA"/>
</dbReference>
<dbReference type="EMBL" id="AP014959">
    <property type="protein sequence ID" value="BAS86754.1"/>
    <property type="molecule type" value="Genomic_DNA"/>
</dbReference>
<dbReference type="EMBL" id="CM000140">
    <property type="protein sequence ID" value="EAZ28845.1"/>
    <property type="molecule type" value="Genomic_DNA"/>
</dbReference>
<dbReference type="EMBL" id="AK072204">
    <property type="protein sequence ID" value="BAG92869.1"/>
    <property type="status" value="ALT_SEQ"/>
    <property type="molecule type" value="mRNA"/>
</dbReference>
<dbReference type="SMR" id="Q6F3A6"/>
<dbReference type="FunCoup" id="Q6F3A6">
    <property type="interactions" value="2052"/>
</dbReference>
<dbReference type="STRING" id="39947.Q6F3A6"/>
<dbReference type="PaxDb" id="39947-Q6F3A6"/>
<dbReference type="EnsemblPlants" id="Os03t0788500-01">
    <property type="protein sequence ID" value="Os03t0788500-01"/>
    <property type="gene ID" value="Os03g0788500"/>
</dbReference>
<dbReference type="Gramene" id="Os03t0788500-01">
    <property type="protein sequence ID" value="Os03t0788500-01"/>
    <property type="gene ID" value="Os03g0788500"/>
</dbReference>
<dbReference type="KEGG" id="dosa:Os03g0788500"/>
<dbReference type="eggNOG" id="KOG0032">
    <property type="taxonomic scope" value="Eukaryota"/>
</dbReference>
<dbReference type="HOGENOM" id="CLU_000288_37_1_1"/>
<dbReference type="InParanoid" id="Q6F3A6"/>
<dbReference type="OMA" id="RPPEQMT"/>
<dbReference type="Proteomes" id="UP000000763">
    <property type="component" value="Chromosome 3"/>
</dbReference>
<dbReference type="Proteomes" id="UP000007752">
    <property type="component" value="Chromosome 3"/>
</dbReference>
<dbReference type="Proteomes" id="UP000059680">
    <property type="component" value="Chromosome 3"/>
</dbReference>
<dbReference type="GO" id="GO:0005737">
    <property type="term" value="C:cytoplasm"/>
    <property type="evidence" value="ECO:0000318"/>
    <property type="project" value="GO_Central"/>
</dbReference>
<dbReference type="GO" id="GO:0016020">
    <property type="term" value="C:membrane"/>
    <property type="evidence" value="ECO:0007669"/>
    <property type="project" value="UniProtKB-SubCell"/>
</dbReference>
<dbReference type="GO" id="GO:0005634">
    <property type="term" value="C:nucleus"/>
    <property type="evidence" value="ECO:0000318"/>
    <property type="project" value="GO_Central"/>
</dbReference>
<dbReference type="GO" id="GO:0005524">
    <property type="term" value="F:ATP binding"/>
    <property type="evidence" value="ECO:0007669"/>
    <property type="project" value="UniProtKB-KW"/>
</dbReference>
<dbReference type="GO" id="GO:0005509">
    <property type="term" value="F:calcium ion binding"/>
    <property type="evidence" value="ECO:0007669"/>
    <property type="project" value="InterPro"/>
</dbReference>
<dbReference type="GO" id="GO:0009931">
    <property type="term" value="F:calcium-dependent protein serine/threonine kinase activity"/>
    <property type="evidence" value="ECO:0000318"/>
    <property type="project" value="GO_Central"/>
</dbReference>
<dbReference type="GO" id="GO:0004683">
    <property type="term" value="F:calcium/calmodulin-dependent protein kinase activity"/>
    <property type="evidence" value="ECO:0000318"/>
    <property type="project" value="GO_Central"/>
</dbReference>
<dbReference type="GO" id="GO:0005516">
    <property type="term" value="F:calmodulin binding"/>
    <property type="evidence" value="ECO:0000318"/>
    <property type="project" value="GO_Central"/>
</dbReference>
<dbReference type="GO" id="GO:0106310">
    <property type="term" value="F:protein serine kinase activity"/>
    <property type="evidence" value="ECO:0007669"/>
    <property type="project" value="RHEA"/>
</dbReference>
<dbReference type="GO" id="GO:0035556">
    <property type="term" value="P:intracellular signal transduction"/>
    <property type="evidence" value="ECO:0000318"/>
    <property type="project" value="GO_Central"/>
</dbReference>
<dbReference type="CDD" id="cd00051">
    <property type="entry name" value="EFh"/>
    <property type="match status" value="2"/>
</dbReference>
<dbReference type="CDD" id="cd05117">
    <property type="entry name" value="STKc_CAMK"/>
    <property type="match status" value="1"/>
</dbReference>
<dbReference type="FunFam" id="1.10.238.10:FF:000015">
    <property type="entry name" value="Calcium-dependent protein kinase 1"/>
    <property type="match status" value="1"/>
</dbReference>
<dbReference type="FunFam" id="3.30.200.20:FF:000004">
    <property type="entry name" value="Calcium-dependent protein kinase 1"/>
    <property type="match status" value="1"/>
</dbReference>
<dbReference type="FunFam" id="1.10.510.10:FF:000249">
    <property type="entry name" value="Calcium-dependent protein kinase SK5"/>
    <property type="match status" value="1"/>
</dbReference>
<dbReference type="Gene3D" id="1.10.238.10">
    <property type="entry name" value="EF-hand"/>
    <property type="match status" value="1"/>
</dbReference>
<dbReference type="Gene3D" id="3.30.200.20">
    <property type="entry name" value="Phosphorylase Kinase, domain 1"/>
    <property type="match status" value="1"/>
</dbReference>
<dbReference type="Gene3D" id="1.10.510.10">
    <property type="entry name" value="Transferase(Phosphotransferase) domain 1"/>
    <property type="match status" value="1"/>
</dbReference>
<dbReference type="InterPro" id="IPR050205">
    <property type="entry name" value="CDPK_Ser/Thr_kinases"/>
</dbReference>
<dbReference type="InterPro" id="IPR011992">
    <property type="entry name" value="EF-hand-dom_pair"/>
</dbReference>
<dbReference type="InterPro" id="IPR018247">
    <property type="entry name" value="EF_Hand_1_Ca_BS"/>
</dbReference>
<dbReference type="InterPro" id="IPR002048">
    <property type="entry name" value="EF_hand_dom"/>
</dbReference>
<dbReference type="InterPro" id="IPR011009">
    <property type="entry name" value="Kinase-like_dom_sf"/>
</dbReference>
<dbReference type="InterPro" id="IPR000719">
    <property type="entry name" value="Prot_kinase_dom"/>
</dbReference>
<dbReference type="InterPro" id="IPR017441">
    <property type="entry name" value="Protein_kinase_ATP_BS"/>
</dbReference>
<dbReference type="InterPro" id="IPR008271">
    <property type="entry name" value="Ser/Thr_kinase_AS"/>
</dbReference>
<dbReference type="PANTHER" id="PTHR24349">
    <property type="entry name" value="SERINE/THREONINE-PROTEIN KINASE"/>
    <property type="match status" value="1"/>
</dbReference>
<dbReference type="Pfam" id="PF13499">
    <property type="entry name" value="EF-hand_7"/>
    <property type="match status" value="2"/>
</dbReference>
<dbReference type="Pfam" id="PF00069">
    <property type="entry name" value="Pkinase"/>
    <property type="match status" value="1"/>
</dbReference>
<dbReference type="SMART" id="SM00054">
    <property type="entry name" value="EFh"/>
    <property type="match status" value="4"/>
</dbReference>
<dbReference type="SMART" id="SM00220">
    <property type="entry name" value="S_TKc"/>
    <property type="match status" value="1"/>
</dbReference>
<dbReference type="SUPFAM" id="SSF47473">
    <property type="entry name" value="EF-hand"/>
    <property type="match status" value="1"/>
</dbReference>
<dbReference type="SUPFAM" id="SSF56112">
    <property type="entry name" value="Protein kinase-like (PK-like)"/>
    <property type="match status" value="1"/>
</dbReference>
<dbReference type="PROSITE" id="PS00018">
    <property type="entry name" value="EF_HAND_1"/>
    <property type="match status" value="4"/>
</dbReference>
<dbReference type="PROSITE" id="PS50222">
    <property type="entry name" value="EF_HAND_2"/>
    <property type="match status" value="4"/>
</dbReference>
<dbReference type="PROSITE" id="PS00107">
    <property type="entry name" value="PROTEIN_KINASE_ATP"/>
    <property type="match status" value="1"/>
</dbReference>
<dbReference type="PROSITE" id="PS50011">
    <property type="entry name" value="PROTEIN_KINASE_DOM"/>
    <property type="match status" value="1"/>
</dbReference>
<dbReference type="PROSITE" id="PS00108">
    <property type="entry name" value="PROTEIN_KINASE_ST"/>
    <property type="match status" value="1"/>
</dbReference>
<organism>
    <name type="scientific">Oryza sativa subsp. japonica</name>
    <name type="common">Rice</name>
    <dbReference type="NCBI Taxonomy" id="39947"/>
    <lineage>
        <taxon>Eukaryota</taxon>
        <taxon>Viridiplantae</taxon>
        <taxon>Streptophyta</taxon>
        <taxon>Embryophyta</taxon>
        <taxon>Tracheophyta</taxon>
        <taxon>Spermatophyta</taxon>
        <taxon>Magnoliopsida</taxon>
        <taxon>Liliopsida</taxon>
        <taxon>Poales</taxon>
        <taxon>Poaceae</taxon>
        <taxon>BOP clade</taxon>
        <taxon>Oryzoideae</taxon>
        <taxon>Oryzeae</taxon>
        <taxon>Oryzinae</taxon>
        <taxon>Oryza</taxon>
        <taxon>Oryza sativa</taxon>
    </lineage>
</organism>
<name>CDPKA_ORYSJ</name>
<proteinExistence type="evidence at transcript level"/>
<comment type="function">
    <text evidence="1">May play a role in signal transduction pathways that involve calcium as a second messenger.</text>
</comment>
<comment type="catalytic activity">
    <reaction evidence="9">
        <text>L-seryl-[protein] + ATP = O-phospho-L-seryl-[protein] + ADP + H(+)</text>
        <dbReference type="Rhea" id="RHEA:17989"/>
        <dbReference type="Rhea" id="RHEA-COMP:9863"/>
        <dbReference type="Rhea" id="RHEA-COMP:11604"/>
        <dbReference type="ChEBI" id="CHEBI:15378"/>
        <dbReference type="ChEBI" id="CHEBI:29999"/>
        <dbReference type="ChEBI" id="CHEBI:30616"/>
        <dbReference type="ChEBI" id="CHEBI:83421"/>
        <dbReference type="ChEBI" id="CHEBI:456216"/>
        <dbReference type="EC" id="2.7.11.1"/>
    </reaction>
</comment>
<comment type="catalytic activity">
    <reaction evidence="9">
        <text>L-threonyl-[protein] + ATP = O-phospho-L-threonyl-[protein] + ADP + H(+)</text>
        <dbReference type="Rhea" id="RHEA:46608"/>
        <dbReference type="Rhea" id="RHEA-COMP:11060"/>
        <dbReference type="Rhea" id="RHEA-COMP:11605"/>
        <dbReference type="ChEBI" id="CHEBI:15378"/>
        <dbReference type="ChEBI" id="CHEBI:30013"/>
        <dbReference type="ChEBI" id="CHEBI:30616"/>
        <dbReference type="ChEBI" id="CHEBI:61977"/>
        <dbReference type="ChEBI" id="CHEBI:456216"/>
        <dbReference type="EC" id="2.7.11.1"/>
    </reaction>
</comment>
<comment type="activity regulation">
    <text evidence="1">Activated by calcium. Autophosphorylation may play an important role in the regulation of the kinase activity.</text>
</comment>
<comment type="subcellular location">
    <subcellularLocation>
        <location evidence="9">Membrane</location>
        <topology evidence="9">Lipid-anchor</topology>
    </subcellularLocation>
</comment>
<comment type="tissue specificity">
    <text evidence="6">Expressed in roots.</text>
</comment>
<comment type="induction">
    <text evidence="7">By UV-C.</text>
</comment>
<comment type="domain">
    <text evidence="1">There are 3 contiguous domains conserved in the CDPK subfamily: a kinase domain, an autoinhibitory (junction) domain and a calmodulin-like domain. The autoinhibitory domain (397-427) inactivates kinase activity under calcium-free conditions.</text>
</comment>
<comment type="similarity">
    <text evidence="9">Belongs to the protein kinase superfamily. Ser/Thr protein kinase family. CDPK subfamily.</text>
</comment>
<comment type="sequence caution" evidence="9">
    <conflict type="erroneous termination">
        <sequence resource="EMBL-CDS" id="BAG92869"/>
    </conflict>
    <text>Extended C-terminus.</text>
</comment>
<accession>Q6F3A6</accession>
<accession>A3ANF6</accession>
<accession>B7EKH2</accession>
<feature type="initiator methionine" description="Removed" evidence="2">
    <location>
        <position position="1"/>
    </location>
</feature>
<feature type="chain" id="PRO_0000437554" description="Calcium-dependent protein kinase 10">
    <location>
        <begin position="2"/>
        <end position="599"/>
    </location>
</feature>
<feature type="domain" description="Protein kinase" evidence="3">
    <location>
        <begin position="133"/>
        <end position="391"/>
    </location>
</feature>
<feature type="domain" description="EF-hand 1" evidence="4">
    <location>
        <begin position="434"/>
        <end position="469"/>
    </location>
</feature>
<feature type="domain" description="EF-hand 2" evidence="4">
    <location>
        <begin position="470"/>
        <end position="505"/>
    </location>
</feature>
<feature type="domain" description="EF-hand 3" evidence="4">
    <location>
        <begin position="506"/>
        <end position="541"/>
    </location>
</feature>
<feature type="domain" description="EF-hand 4" evidence="4">
    <location>
        <begin position="544"/>
        <end position="575"/>
    </location>
</feature>
<feature type="region of interest" description="Disordered" evidence="5">
    <location>
        <begin position="27"/>
        <end position="110"/>
    </location>
</feature>
<feature type="region of interest" description="Autoinhibitory domain" evidence="1">
    <location>
        <begin position="397"/>
        <end position="427"/>
    </location>
</feature>
<feature type="compositionally biased region" description="Polar residues" evidence="5">
    <location>
        <begin position="74"/>
        <end position="84"/>
    </location>
</feature>
<feature type="compositionally biased region" description="Low complexity" evidence="5">
    <location>
        <begin position="87"/>
        <end position="98"/>
    </location>
</feature>
<feature type="active site" description="Proton acceptor" evidence="3">
    <location>
        <position position="257"/>
    </location>
</feature>
<feature type="binding site" evidence="3">
    <location>
        <begin position="139"/>
        <end position="147"/>
    </location>
    <ligand>
        <name>ATP</name>
        <dbReference type="ChEBI" id="CHEBI:30616"/>
    </ligand>
</feature>
<feature type="binding site" evidence="3">
    <location>
        <position position="162"/>
    </location>
    <ligand>
        <name>ATP</name>
        <dbReference type="ChEBI" id="CHEBI:30616"/>
    </ligand>
</feature>
<feature type="binding site" evidence="4">
    <location>
        <position position="447"/>
    </location>
    <ligand>
        <name>Ca(2+)</name>
        <dbReference type="ChEBI" id="CHEBI:29108"/>
        <label>1</label>
    </ligand>
</feature>
<feature type="binding site" evidence="4">
    <location>
        <position position="449"/>
    </location>
    <ligand>
        <name>Ca(2+)</name>
        <dbReference type="ChEBI" id="CHEBI:29108"/>
        <label>1</label>
    </ligand>
</feature>
<feature type="binding site" evidence="4">
    <location>
        <position position="451"/>
    </location>
    <ligand>
        <name>Ca(2+)</name>
        <dbReference type="ChEBI" id="CHEBI:29108"/>
        <label>1</label>
    </ligand>
</feature>
<feature type="binding site" evidence="4">
    <location>
        <position position="453"/>
    </location>
    <ligand>
        <name>Ca(2+)</name>
        <dbReference type="ChEBI" id="CHEBI:29108"/>
        <label>1</label>
    </ligand>
</feature>
<feature type="binding site" evidence="4">
    <location>
        <position position="458"/>
    </location>
    <ligand>
        <name>Ca(2+)</name>
        <dbReference type="ChEBI" id="CHEBI:29108"/>
        <label>1</label>
    </ligand>
</feature>
<feature type="binding site" evidence="4">
    <location>
        <position position="483"/>
    </location>
    <ligand>
        <name>Ca(2+)</name>
        <dbReference type="ChEBI" id="CHEBI:29108"/>
        <label>2</label>
    </ligand>
</feature>
<feature type="binding site" evidence="4">
    <location>
        <position position="485"/>
    </location>
    <ligand>
        <name>Ca(2+)</name>
        <dbReference type="ChEBI" id="CHEBI:29108"/>
        <label>2</label>
    </ligand>
</feature>
<feature type="binding site" evidence="4">
    <location>
        <position position="487"/>
    </location>
    <ligand>
        <name>Ca(2+)</name>
        <dbReference type="ChEBI" id="CHEBI:29108"/>
        <label>2</label>
    </ligand>
</feature>
<feature type="binding site" evidence="4">
    <location>
        <position position="489"/>
    </location>
    <ligand>
        <name>Ca(2+)</name>
        <dbReference type="ChEBI" id="CHEBI:29108"/>
        <label>2</label>
    </ligand>
</feature>
<feature type="binding site" evidence="4">
    <location>
        <position position="494"/>
    </location>
    <ligand>
        <name>Ca(2+)</name>
        <dbReference type="ChEBI" id="CHEBI:29108"/>
        <label>2</label>
    </ligand>
</feature>
<feature type="binding site" evidence="4">
    <location>
        <position position="519"/>
    </location>
    <ligand>
        <name>Ca(2+)</name>
        <dbReference type="ChEBI" id="CHEBI:29108"/>
        <label>3</label>
    </ligand>
</feature>
<feature type="binding site" evidence="4">
    <location>
        <position position="521"/>
    </location>
    <ligand>
        <name>Ca(2+)</name>
        <dbReference type="ChEBI" id="CHEBI:29108"/>
        <label>3</label>
    </ligand>
</feature>
<feature type="binding site" evidence="4">
    <location>
        <position position="523"/>
    </location>
    <ligand>
        <name>Ca(2+)</name>
        <dbReference type="ChEBI" id="CHEBI:29108"/>
        <label>3</label>
    </ligand>
</feature>
<feature type="binding site" evidence="4">
    <location>
        <position position="525"/>
    </location>
    <ligand>
        <name>Ca(2+)</name>
        <dbReference type="ChEBI" id="CHEBI:29108"/>
        <label>3</label>
    </ligand>
</feature>
<feature type="binding site" evidence="4">
    <location>
        <position position="530"/>
    </location>
    <ligand>
        <name>Ca(2+)</name>
        <dbReference type="ChEBI" id="CHEBI:29108"/>
        <label>3</label>
    </ligand>
</feature>
<feature type="binding site" evidence="4">
    <location>
        <position position="553"/>
    </location>
    <ligand>
        <name>Ca(2+)</name>
        <dbReference type="ChEBI" id="CHEBI:29108"/>
        <label>4</label>
    </ligand>
</feature>
<feature type="binding site" evidence="4">
    <location>
        <position position="555"/>
    </location>
    <ligand>
        <name>Ca(2+)</name>
        <dbReference type="ChEBI" id="CHEBI:29108"/>
        <label>4</label>
    </ligand>
</feature>
<feature type="binding site" evidence="4">
    <location>
        <position position="557"/>
    </location>
    <ligand>
        <name>Ca(2+)</name>
        <dbReference type="ChEBI" id="CHEBI:29108"/>
        <label>4</label>
    </ligand>
</feature>
<feature type="binding site" evidence="4">
    <location>
        <position position="559"/>
    </location>
    <ligand>
        <name>Ca(2+)</name>
        <dbReference type="ChEBI" id="CHEBI:29108"/>
        <label>4</label>
    </ligand>
</feature>
<feature type="binding site" evidence="4">
    <location>
        <position position="564"/>
    </location>
    <ligand>
        <name>Ca(2+)</name>
        <dbReference type="ChEBI" id="CHEBI:29108"/>
        <label>4</label>
    </ligand>
</feature>
<feature type="lipid moiety-binding region" description="N-myristoyl glycine" evidence="2">
    <location>
        <position position="2"/>
    </location>
</feature>
<feature type="sequence conflict" description="In Ref. 5; EAZ28845." evidence="9" ref="5">
    <original>GGG</original>
    <variation>FCC</variation>
    <location>
        <begin position="43"/>
        <end position="45"/>
    </location>
</feature>
<sequence length="599" mass="65862">MGNTCVGPSISKNGFFQSVSTVLWKARQDGDDALPGANGAPDGGGQGRLPAPPPPTSDAPLAVQNKPPEHVKIVSTTDTASAEQDASKSSAGSDSGEAARPRPRVPPVKRVSSAGLLVGSVLKRKTESLKDKYSLGRKLGQGQFGTTYLCVERATGKEFACKSILKRKLVTDDDVEDVRREIQIMYHLAGHPNVISIRGAYEDAVAVHLVMELCAGGELFDRIVQKGHYTERKAAELARVIVGVVEVCHSMGVMHRDLKPENFLFADQTEEAALKTIDFGLSIFFRPGQVFTDVVGSPYYVAPEVLKKKYGQEADVWSAGVIIYILLCGVPPFWAENEQGIFEEVLHGRLDFQSEPWPSISEGAKDLVRRMLVRDPKKRLTAHEVLRHPWVQVGGLAPDKPLDSAVLSRMKQFSAMNKLKKMALRVIAENLSEDEIAGLKEMFKMIDTDNSGQITFEELKVGLKKVGANLQESEIYALMQAADVDNSGTIDYGEFIAATLHMNKIEREDHLFAAFQYFDKDGSGYITADELQLACEEFGLGDVQLEEMIREVDEDNDGRIDYNEFVAMMQKPTMGLPAKKSGGLQNSFSIGFREALRMS</sequence>
<protein>
    <recommendedName>
        <fullName evidence="9">Calcium-dependent protein kinase 10</fullName>
        <shortName evidence="9">OsCDPK10</shortName>
        <shortName evidence="8">OsCPK10</shortName>
        <ecNumber evidence="9">2.7.11.1</ecNumber>
    </recommendedName>
</protein>
<reference key="1">
    <citation type="journal article" date="2005" name="Genome Res.">
        <title>Sequence, annotation, and analysis of synteny between rice chromosome 3 and diverged grass species.</title>
        <authorList>
            <consortium name="The rice chromosome 3 sequencing consortium"/>
            <person name="Buell C.R."/>
            <person name="Yuan Q."/>
            <person name="Ouyang S."/>
            <person name="Liu J."/>
            <person name="Zhu W."/>
            <person name="Wang A."/>
            <person name="Maiti R."/>
            <person name="Haas B."/>
            <person name="Wortman J."/>
            <person name="Pertea M."/>
            <person name="Jones K.M."/>
            <person name="Kim M."/>
            <person name="Overton L."/>
            <person name="Tsitrin T."/>
            <person name="Fadrosh D."/>
            <person name="Bera J."/>
            <person name="Weaver B."/>
            <person name="Jin S."/>
            <person name="Johri S."/>
            <person name="Reardon M."/>
            <person name="Webb K."/>
            <person name="Hill J."/>
            <person name="Moffat K."/>
            <person name="Tallon L."/>
            <person name="Van Aken S."/>
            <person name="Lewis M."/>
            <person name="Utterback T."/>
            <person name="Feldblyum T."/>
            <person name="Zismann V."/>
            <person name="Iobst S."/>
            <person name="Hsiao J."/>
            <person name="de Vazeille A.R."/>
            <person name="Salzberg S.L."/>
            <person name="White O."/>
            <person name="Fraser C.M."/>
            <person name="Yu Y."/>
            <person name="Kim H."/>
            <person name="Rambo T."/>
            <person name="Currie J."/>
            <person name="Collura K."/>
            <person name="Kernodle-Thompson S."/>
            <person name="Wei F."/>
            <person name="Kudrna K."/>
            <person name="Ammiraju J.S.S."/>
            <person name="Luo M."/>
            <person name="Goicoechea J.L."/>
            <person name="Wing R.A."/>
            <person name="Henry D."/>
            <person name="Oates R."/>
            <person name="Palmer M."/>
            <person name="Pries G."/>
            <person name="Saski C."/>
            <person name="Simmons J."/>
            <person name="Soderlund C."/>
            <person name="Nelson W."/>
            <person name="de la Bastide M."/>
            <person name="Spiegel L."/>
            <person name="Nascimento L."/>
            <person name="Huang E."/>
            <person name="Preston R."/>
            <person name="Zutavern T."/>
            <person name="Palmer L."/>
            <person name="O'Shaughnessy A."/>
            <person name="Dike S."/>
            <person name="McCombie W.R."/>
            <person name="Minx P."/>
            <person name="Cordum H."/>
            <person name="Wilson R."/>
            <person name="Jin W."/>
            <person name="Lee H.R."/>
            <person name="Jiang J."/>
            <person name="Jackson S."/>
        </authorList>
    </citation>
    <scope>NUCLEOTIDE SEQUENCE [LARGE SCALE GENOMIC DNA]</scope>
    <source>
        <strain>cv. Nipponbare</strain>
    </source>
</reference>
<reference key="2">
    <citation type="journal article" date="2005" name="Nature">
        <title>The map-based sequence of the rice genome.</title>
        <authorList>
            <consortium name="International rice genome sequencing project (IRGSP)"/>
        </authorList>
    </citation>
    <scope>NUCLEOTIDE SEQUENCE [LARGE SCALE GENOMIC DNA]</scope>
    <source>
        <strain>cv. Nipponbare</strain>
    </source>
</reference>
<reference key="3">
    <citation type="journal article" date="2008" name="Nucleic Acids Res.">
        <title>The rice annotation project database (RAP-DB): 2008 update.</title>
        <authorList>
            <consortium name="The rice annotation project (RAP)"/>
        </authorList>
    </citation>
    <scope>GENOME REANNOTATION</scope>
    <source>
        <strain>cv. Nipponbare</strain>
    </source>
</reference>
<reference key="4">
    <citation type="journal article" date="2013" name="Rice">
        <title>Improvement of the Oryza sativa Nipponbare reference genome using next generation sequence and optical map data.</title>
        <authorList>
            <person name="Kawahara Y."/>
            <person name="de la Bastide M."/>
            <person name="Hamilton J.P."/>
            <person name="Kanamori H."/>
            <person name="McCombie W.R."/>
            <person name="Ouyang S."/>
            <person name="Schwartz D.C."/>
            <person name="Tanaka T."/>
            <person name="Wu J."/>
            <person name="Zhou S."/>
            <person name="Childs K.L."/>
            <person name="Davidson R.M."/>
            <person name="Lin H."/>
            <person name="Quesada-Ocampo L."/>
            <person name="Vaillancourt B."/>
            <person name="Sakai H."/>
            <person name="Lee S.S."/>
            <person name="Kim J."/>
            <person name="Numa H."/>
            <person name="Itoh T."/>
            <person name="Buell C.R."/>
            <person name="Matsumoto T."/>
        </authorList>
    </citation>
    <scope>GENOME REANNOTATION</scope>
    <source>
        <strain>cv. Nipponbare</strain>
    </source>
</reference>
<reference key="5">
    <citation type="journal article" date="2005" name="PLoS Biol.">
        <title>The genomes of Oryza sativa: a history of duplications.</title>
        <authorList>
            <person name="Yu J."/>
            <person name="Wang J."/>
            <person name="Lin W."/>
            <person name="Li S."/>
            <person name="Li H."/>
            <person name="Zhou J."/>
            <person name="Ni P."/>
            <person name="Dong W."/>
            <person name="Hu S."/>
            <person name="Zeng C."/>
            <person name="Zhang J."/>
            <person name="Zhang Y."/>
            <person name="Li R."/>
            <person name="Xu Z."/>
            <person name="Li S."/>
            <person name="Li X."/>
            <person name="Zheng H."/>
            <person name="Cong L."/>
            <person name="Lin L."/>
            <person name="Yin J."/>
            <person name="Geng J."/>
            <person name="Li G."/>
            <person name="Shi J."/>
            <person name="Liu J."/>
            <person name="Lv H."/>
            <person name="Li J."/>
            <person name="Wang J."/>
            <person name="Deng Y."/>
            <person name="Ran L."/>
            <person name="Shi X."/>
            <person name="Wang X."/>
            <person name="Wu Q."/>
            <person name="Li C."/>
            <person name="Ren X."/>
            <person name="Wang J."/>
            <person name="Wang X."/>
            <person name="Li D."/>
            <person name="Liu D."/>
            <person name="Zhang X."/>
            <person name="Ji Z."/>
            <person name="Zhao W."/>
            <person name="Sun Y."/>
            <person name="Zhang Z."/>
            <person name="Bao J."/>
            <person name="Han Y."/>
            <person name="Dong L."/>
            <person name="Ji J."/>
            <person name="Chen P."/>
            <person name="Wu S."/>
            <person name="Liu J."/>
            <person name="Xiao Y."/>
            <person name="Bu D."/>
            <person name="Tan J."/>
            <person name="Yang L."/>
            <person name="Ye C."/>
            <person name="Zhang J."/>
            <person name="Xu J."/>
            <person name="Zhou Y."/>
            <person name="Yu Y."/>
            <person name="Zhang B."/>
            <person name="Zhuang S."/>
            <person name="Wei H."/>
            <person name="Liu B."/>
            <person name="Lei M."/>
            <person name="Yu H."/>
            <person name="Li Y."/>
            <person name="Xu H."/>
            <person name="Wei S."/>
            <person name="He X."/>
            <person name="Fang L."/>
            <person name="Zhang Z."/>
            <person name="Zhang Y."/>
            <person name="Huang X."/>
            <person name="Su Z."/>
            <person name="Tong W."/>
            <person name="Li J."/>
            <person name="Tong Z."/>
            <person name="Li S."/>
            <person name="Ye J."/>
            <person name="Wang L."/>
            <person name="Fang L."/>
            <person name="Lei T."/>
            <person name="Chen C.-S."/>
            <person name="Chen H.-C."/>
            <person name="Xu Z."/>
            <person name="Li H."/>
            <person name="Huang H."/>
            <person name="Zhang F."/>
            <person name="Xu H."/>
            <person name="Li N."/>
            <person name="Zhao C."/>
            <person name="Li S."/>
            <person name="Dong L."/>
            <person name="Huang Y."/>
            <person name="Li L."/>
            <person name="Xi Y."/>
            <person name="Qi Q."/>
            <person name="Li W."/>
            <person name="Zhang B."/>
            <person name="Hu W."/>
            <person name="Zhang Y."/>
            <person name="Tian X."/>
            <person name="Jiao Y."/>
            <person name="Liang X."/>
            <person name="Jin J."/>
            <person name="Gao L."/>
            <person name="Zheng W."/>
            <person name="Hao B."/>
            <person name="Liu S.-M."/>
            <person name="Wang W."/>
            <person name="Yuan L."/>
            <person name="Cao M."/>
            <person name="McDermott J."/>
            <person name="Samudrala R."/>
            <person name="Wang J."/>
            <person name="Wong G.K.-S."/>
            <person name="Yang H."/>
        </authorList>
    </citation>
    <scope>NUCLEOTIDE SEQUENCE [LARGE SCALE GENOMIC DNA]</scope>
    <source>
        <strain>cv. Nipponbare</strain>
    </source>
</reference>
<reference key="6">
    <citation type="journal article" date="2003" name="Science">
        <title>Collection, mapping, and annotation of over 28,000 cDNA clones from japonica rice.</title>
        <authorList>
            <consortium name="The rice full-length cDNA consortium"/>
        </authorList>
    </citation>
    <scope>NUCLEOTIDE SEQUENCE [LARGE SCALE MRNA]</scope>
    <source>
        <strain>cv. Nipponbare</strain>
    </source>
</reference>
<reference key="7">
    <citation type="journal article" date="2005" name="Plant Cell Physiol.">
        <title>Genome-wide identification of the rice calcium-dependent protein kinase and its closely related kinase gene families: comprehensive analysis of the CDPKs gene family in rice.</title>
        <authorList>
            <person name="Asano T."/>
            <person name="Tanaka N."/>
            <person name="Yang G."/>
            <person name="Hayashi N."/>
            <person name="Komatsu S."/>
        </authorList>
    </citation>
    <scope>GENE FAMILY</scope>
    <scope>NOMENCLATURE</scope>
    <scope>TISSUE SPECIFICITY</scope>
</reference>
<reference key="8">
    <citation type="journal article" date="2013" name="Phytochemistry">
        <title>Transcriptomic analysis of UV-treated rice leaves reveals UV-induced phytoalexin biosynthetic pathways and their regulatory networks in rice.</title>
        <authorList>
            <person name="Park H.L."/>
            <person name="Lee S.W."/>
            <person name="Jung K.H."/>
            <person name="Hahn T.R."/>
            <person name="Cho M.H."/>
        </authorList>
    </citation>
    <scope>INDUCTION BY UV-C</scope>
</reference>
<gene>
    <name evidence="8" type="primary">CPK10</name>
    <name evidence="12" type="ordered locus">Os03g0788500</name>
    <name evidence="11" type="ordered locus">LOC_Os03g57450</name>
    <name evidence="10" type="ORF">OSJNBb0024J04.20</name>
</gene>